<accession>P29427</accession>
<proteinExistence type="evidence at protein level"/>
<keyword id="KW-0049">Antioxidant</keyword>
<keyword id="KW-0150">Chloroplast</keyword>
<keyword id="KW-0186">Copper</keyword>
<keyword id="KW-0903">Direct protein sequencing</keyword>
<keyword id="KW-0479">Metal-binding</keyword>
<keyword id="KW-0560">Oxidoreductase</keyword>
<keyword id="KW-0934">Plastid</keyword>
<keyword id="KW-0862">Zinc</keyword>
<comment type="function">
    <text>Destroys radicals which are normally produced within the cells and which are toxic to biological systems.</text>
</comment>
<comment type="catalytic activity">
    <reaction>
        <text>2 superoxide + 2 H(+) = H2O2 + O2</text>
        <dbReference type="Rhea" id="RHEA:20696"/>
        <dbReference type="ChEBI" id="CHEBI:15378"/>
        <dbReference type="ChEBI" id="CHEBI:15379"/>
        <dbReference type="ChEBI" id="CHEBI:16240"/>
        <dbReference type="ChEBI" id="CHEBI:18421"/>
        <dbReference type="EC" id="1.15.1.1"/>
    </reaction>
</comment>
<comment type="cofactor">
    <cofactor evidence="1">
        <name>Cu cation</name>
        <dbReference type="ChEBI" id="CHEBI:23378"/>
    </cofactor>
    <text evidence="1">Binds 1 copper ion per subunit.</text>
</comment>
<comment type="cofactor">
    <cofactor evidence="1">
        <name>Zn(2+)</name>
        <dbReference type="ChEBI" id="CHEBI:29105"/>
    </cofactor>
    <text evidence="1">Binds 1 zinc ion per subunit.</text>
</comment>
<comment type="subunit">
    <text>Homodimer.</text>
</comment>
<comment type="subcellular location">
    <subcellularLocation>
        <location>Plastid</location>
        <location>Chloroplast</location>
    </subcellularLocation>
</comment>
<comment type="similarity">
    <text evidence="3">Belongs to the Cu-Zn superoxide dismutase family.</text>
</comment>
<feature type="initiator methionine" description="Removed" evidence="2">
    <location>
        <position position="1"/>
    </location>
</feature>
<feature type="chain" id="PRO_0000164178" description="Superoxide dismutase [Cu-Zn], chloroplastic">
    <location>
        <begin position="2"/>
        <end position="24" status="greater than"/>
    </location>
</feature>
<feature type="non-terminal residue">
    <location>
        <position position="24"/>
    </location>
</feature>
<dbReference type="EC" id="1.15.1.1"/>
<dbReference type="GO" id="GO:0009507">
    <property type="term" value="C:chloroplast"/>
    <property type="evidence" value="ECO:0007669"/>
    <property type="project" value="UniProtKB-SubCell"/>
</dbReference>
<dbReference type="GO" id="GO:0046872">
    <property type="term" value="F:metal ion binding"/>
    <property type="evidence" value="ECO:0007669"/>
    <property type="project" value="UniProtKB-KW"/>
</dbReference>
<dbReference type="GO" id="GO:0004784">
    <property type="term" value="F:superoxide dismutase activity"/>
    <property type="evidence" value="ECO:0007669"/>
    <property type="project" value="UniProtKB-EC"/>
</dbReference>
<organism>
    <name type="scientific">Picea abies</name>
    <name type="common">Norway spruce</name>
    <name type="synonym">Picea excelsa</name>
    <dbReference type="NCBI Taxonomy" id="3329"/>
    <lineage>
        <taxon>Eukaryota</taxon>
        <taxon>Viridiplantae</taxon>
        <taxon>Streptophyta</taxon>
        <taxon>Embryophyta</taxon>
        <taxon>Tracheophyta</taxon>
        <taxon>Spermatophyta</taxon>
        <taxon>Pinopsida</taxon>
        <taxon>Pinidae</taxon>
        <taxon>Conifers I</taxon>
        <taxon>Pinales</taxon>
        <taxon>Pinaceae</taxon>
        <taxon>Picea</taxon>
    </lineage>
</organism>
<reference key="1">
    <citation type="journal article" date="1992" name="Plant Physiol.">
        <title>Purification of two superoxide dismutase isozymes and their subcellular localization in needles and roots of Norway spruce (Picea abies L.) trees.</title>
        <authorList>
            <person name="Kroeniger W."/>
            <person name="Rennenberg H."/>
            <person name="Polle A."/>
        </authorList>
    </citation>
    <scope>PROTEIN SEQUENCE OF 2-24</scope>
    <source>
        <tissue>Needle</tissue>
    </source>
</reference>
<protein>
    <recommendedName>
        <fullName>Superoxide dismutase [Cu-Zn], chloroplastic</fullName>
        <shortName>SOD I</shortName>
        <ecNumber>1.15.1.1</ecNumber>
    </recommendedName>
</protein>
<name>SODCP_PICAB</name>
<evidence type="ECO:0000250" key="1"/>
<evidence type="ECO:0000269" key="2">
    <source>
    </source>
</evidence>
<evidence type="ECO:0000305" key="3"/>
<sequence length="24" mass="2641">MTKKAVVVLWGISQVEGVVNLLQE</sequence>